<name>KDPB_XANAC</name>
<dbReference type="EC" id="7.2.2.6" evidence="1"/>
<dbReference type="EMBL" id="AE008923">
    <property type="protein sequence ID" value="AAM35646.1"/>
    <property type="molecule type" value="Genomic_DNA"/>
</dbReference>
<dbReference type="RefSeq" id="WP_011050519.1">
    <property type="nucleotide sequence ID" value="NC_003919.1"/>
</dbReference>
<dbReference type="SMR" id="Q8PPC9"/>
<dbReference type="GeneID" id="66909954"/>
<dbReference type="KEGG" id="xac:XAC0757"/>
<dbReference type="eggNOG" id="COG2216">
    <property type="taxonomic scope" value="Bacteria"/>
</dbReference>
<dbReference type="HOGENOM" id="CLU_025728_2_0_6"/>
<dbReference type="Proteomes" id="UP000000576">
    <property type="component" value="Chromosome"/>
</dbReference>
<dbReference type="GO" id="GO:0005886">
    <property type="term" value="C:plasma membrane"/>
    <property type="evidence" value="ECO:0007669"/>
    <property type="project" value="UniProtKB-SubCell"/>
</dbReference>
<dbReference type="GO" id="GO:0005524">
    <property type="term" value="F:ATP binding"/>
    <property type="evidence" value="ECO:0007669"/>
    <property type="project" value="UniProtKB-UniRule"/>
</dbReference>
<dbReference type="GO" id="GO:0016887">
    <property type="term" value="F:ATP hydrolysis activity"/>
    <property type="evidence" value="ECO:0007669"/>
    <property type="project" value="InterPro"/>
</dbReference>
<dbReference type="GO" id="GO:0000287">
    <property type="term" value="F:magnesium ion binding"/>
    <property type="evidence" value="ECO:0007669"/>
    <property type="project" value="UniProtKB-UniRule"/>
</dbReference>
<dbReference type="GO" id="GO:0008556">
    <property type="term" value="F:P-type potassium transmembrane transporter activity"/>
    <property type="evidence" value="ECO:0007669"/>
    <property type="project" value="UniProtKB-UniRule"/>
</dbReference>
<dbReference type="FunFam" id="2.70.150.10:FF:000010">
    <property type="entry name" value="Potassium-transporting ATPase ATP-binding subunit"/>
    <property type="match status" value="1"/>
</dbReference>
<dbReference type="FunFam" id="3.40.1110.10:FF:000007">
    <property type="entry name" value="Potassium-transporting ATPase ATP-binding subunit"/>
    <property type="match status" value="1"/>
</dbReference>
<dbReference type="Gene3D" id="3.40.1110.10">
    <property type="entry name" value="Calcium-transporting ATPase, cytoplasmic domain N"/>
    <property type="match status" value="1"/>
</dbReference>
<dbReference type="Gene3D" id="2.70.150.10">
    <property type="entry name" value="Calcium-transporting ATPase, cytoplasmic transduction domain A"/>
    <property type="match status" value="1"/>
</dbReference>
<dbReference type="Gene3D" id="3.40.50.1000">
    <property type="entry name" value="HAD superfamily/HAD-like"/>
    <property type="match status" value="1"/>
</dbReference>
<dbReference type="HAMAP" id="MF_00285">
    <property type="entry name" value="KdpB"/>
    <property type="match status" value="1"/>
</dbReference>
<dbReference type="InterPro" id="IPR023299">
    <property type="entry name" value="ATPase_P-typ_cyto_dom_N"/>
</dbReference>
<dbReference type="InterPro" id="IPR018303">
    <property type="entry name" value="ATPase_P-typ_P_site"/>
</dbReference>
<dbReference type="InterPro" id="IPR023298">
    <property type="entry name" value="ATPase_P-typ_TM_dom_sf"/>
</dbReference>
<dbReference type="InterPro" id="IPR008250">
    <property type="entry name" value="ATPase_P-typ_transduc_dom_A_sf"/>
</dbReference>
<dbReference type="InterPro" id="IPR036412">
    <property type="entry name" value="HAD-like_sf"/>
</dbReference>
<dbReference type="InterPro" id="IPR023214">
    <property type="entry name" value="HAD_sf"/>
</dbReference>
<dbReference type="InterPro" id="IPR006391">
    <property type="entry name" value="P-type_ATPase_bsu_IA"/>
</dbReference>
<dbReference type="InterPro" id="IPR001757">
    <property type="entry name" value="P_typ_ATPase"/>
</dbReference>
<dbReference type="InterPro" id="IPR044492">
    <property type="entry name" value="P_typ_ATPase_HD_dom"/>
</dbReference>
<dbReference type="NCBIfam" id="TIGR01494">
    <property type="entry name" value="ATPase_P-type"/>
    <property type="match status" value="2"/>
</dbReference>
<dbReference type="NCBIfam" id="TIGR01497">
    <property type="entry name" value="kdpB"/>
    <property type="match status" value="1"/>
</dbReference>
<dbReference type="PANTHER" id="PTHR43743">
    <property type="entry name" value="POTASSIUM-TRANSPORTING ATPASE ATP-BINDING SUBUNIT"/>
    <property type="match status" value="1"/>
</dbReference>
<dbReference type="PANTHER" id="PTHR43743:SF1">
    <property type="entry name" value="POTASSIUM-TRANSPORTING ATPASE ATP-BINDING SUBUNIT"/>
    <property type="match status" value="1"/>
</dbReference>
<dbReference type="Pfam" id="PF00122">
    <property type="entry name" value="E1-E2_ATPase"/>
    <property type="match status" value="1"/>
</dbReference>
<dbReference type="Pfam" id="PF00702">
    <property type="entry name" value="Hydrolase"/>
    <property type="match status" value="1"/>
</dbReference>
<dbReference type="PRINTS" id="PR00119">
    <property type="entry name" value="CATATPASE"/>
</dbReference>
<dbReference type="SFLD" id="SFLDG00002">
    <property type="entry name" value="C1.7:_P-type_atpase_like"/>
    <property type="match status" value="1"/>
</dbReference>
<dbReference type="SFLD" id="SFLDF00027">
    <property type="entry name" value="p-type_atpase"/>
    <property type="match status" value="1"/>
</dbReference>
<dbReference type="SUPFAM" id="SSF81653">
    <property type="entry name" value="Calcium ATPase, transduction domain A"/>
    <property type="match status" value="1"/>
</dbReference>
<dbReference type="SUPFAM" id="SSF81665">
    <property type="entry name" value="Calcium ATPase, transmembrane domain M"/>
    <property type="match status" value="1"/>
</dbReference>
<dbReference type="SUPFAM" id="SSF56784">
    <property type="entry name" value="HAD-like"/>
    <property type="match status" value="1"/>
</dbReference>
<dbReference type="PROSITE" id="PS00154">
    <property type="entry name" value="ATPASE_E1_E2"/>
    <property type="match status" value="1"/>
</dbReference>
<gene>
    <name evidence="1" type="primary">kdpB</name>
    <name type="ordered locus">XAC0757</name>
</gene>
<feature type="chain" id="PRO_0000046148" description="Potassium-transporting ATPase ATP-binding subunit">
    <location>
        <begin position="1"/>
        <end position="682"/>
    </location>
</feature>
<feature type="transmembrane region" description="Helical" evidence="1">
    <location>
        <begin position="15"/>
        <end position="35"/>
    </location>
</feature>
<feature type="transmembrane region" description="Helical" evidence="1">
    <location>
        <begin position="42"/>
        <end position="62"/>
    </location>
</feature>
<feature type="transmembrane region" description="Helical" evidence="1">
    <location>
        <begin position="66"/>
        <end position="86"/>
    </location>
</feature>
<feature type="transmembrane region" description="Helical" evidence="1">
    <location>
        <begin position="233"/>
        <end position="253"/>
    </location>
</feature>
<feature type="transmembrane region" description="Helical" evidence="1">
    <location>
        <begin position="257"/>
        <end position="277"/>
    </location>
</feature>
<feature type="transmembrane region" description="Helical" evidence="1">
    <location>
        <begin position="588"/>
        <end position="608"/>
    </location>
</feature>
<feature type="transmembrane region" description="Helical" evidence="1">
    <location>
        <begin position="616"/>
        <end position="636"/>
    </location>
</feature>
<feature type="transmembrane region" description="Helical" evidence="1">
    <location>
        <begin position="662"/>
        <end position="682"/>
    </location>
</feature>
<feature type="active site" description="4-aspartylphosphate intermediate" evidence="1">
    <location>
        <position position="310"/>
    </location>
</feature>
<feature type="binding site" evidence="1">
    <location>
        <position position="347"/>
    </location>
    <ligand>
        <name>ATP</name>
        <dbReference type="ChEBI" id="CHEBI:30616"/>
    </ligand>
</feature>
<feature type="binding site" evidence="1">
    <location>
        <position position="351"/>
    </location>
    <ligand>
        <name>ATP</name>
        <dbReference type="ChEBI" id="CHEBI:30616"/>
    </ligand>
</feature>
<feature type="binding site" evidence="1">
    <location>
        <begin position="377"/>
        <end position="384"/>
    </location>
    <ligand>
        <name>ATP</name>
        <dbReference type="ChEBI" id="CHEBI:30616"/>
    </ligand>
</feature>
<feature type="binding site" evidence="1">
    <location>
        <position position="395"/>
    </location>
    <ligand>
        <name>ATP</name>
        <dbReference type="ChEBI" id="CHEBI:30616"/>
    </ligand>
</feature>
<feature type="binding site" evidence="1">
    <location>
        <position position="518"/>
    </location>
    <ligand>
        <name>Mg(2+)</name>
        <dbReference type="ChEBI" id="CHEBI:18420"/>
    </ligand>
</feature>
<feature type="binding site" evidence="1">
    <location>
        <position position="522"/>
    </location>
    <ligand>
        <name>Mg(2+)</name>
        <dbReference type="ChEBI" id="CHEBI:18420"/>
    </ligand>
</feature>
<comment type="function">
    <text evidence="1">Part of the high-affinity ATP-driven potassium transport (or Kdp) system, which catalyzes the hydrolysis of ATP coupled with the electrogenic transport of potassium into the cytoplasm. This subunit is responsible for energy coupling to the transport system and for the release of the potassium ions to the cytoplasm.</text>
</comment>
<comment type="catalytic activity">
    <reaction evidence="1">
        <text>K(+)(out) + ATP + H2O = K(+)(in) + ADP + phosphate + H(+)</text>
        <dbReference type="Rhea" id="RHEA:16777"/>
        <dbReference type="ChEBI" id="CHEBI:15377"/>
        <dbReference type="ChEBI" id="CHEBI:15378"/>
        <dbReference type="ChEBI" id="CHEBI:29103"/>
        <dbReference type="ChEBI" id="CHEBI:30616"/>
        <dbReference type="ChEBI" id="CHEBI:43474"/>
        <dbReference type="ChEBI" id="CHEBI:456216"/>
        <dbReference type="EC" id="7.2.2.6"/>
    </reaction>
    <physiologicalReaction direction="left-to-right" evidence="1">
        <dbReference type="Rhea" id="RHEA:16778"/>
    </physiologicalReaction>
</comment>
<comment type="subunit">
    <text evidence="1">The system is composed of three essential subunits: KdpA, KdpB and KdpC.</text>
</comment>
<comment type="subcellular location">
    <subcellularLocation>
        <location evidence="1">Cell inner membrane</location>
        <topology evidence="1">Multi-pass membrane protein</topology>
    </subcellularLocation>
</comment>
<comment type="similarity">
    <text evidence="1">Belongs to the cation transport ATPase (P-type) (TC 3.A.3) family. Type IA subfamily.</text>
</comment>
<reference key="1">
    <citation type="journal article" date="2002" name="Nature">
        <title>Comparison of the genomes of two Xanthomonas pathogens with differing host specificities.</title>
        <authorList>
            <person name="da Silva A.C.R."/>
            <person name="Ferro J.A."/>
            <person name="Reinach F.C."/>
            <person name="Farah C.S."/>
            <person name="Furlan L.R."/>
            <person name="Quaggio R.B."/>
            <person name="Monteiro-Vitorello C.B."/>
            <person name="Van Sluys M.A."/>
            <person name="Almeida N.F. Jr."/>
            <person name="Alves L.M.C."/>
            <person name="do Amaral A.M."/>
            <person name="Bertolini M.C."/>
            <person name="Camargo L.E.A."/>
            <person name="Camarotte G."/>
            <person name="Cannavan F."/>
            <person name="Cardozo J."/>
            <person name="Chambergo F."/>
            <person name="Ciapina L.P."/>
            <person name="Cicarelli R.M.B."/>
            <person name="Coutinho L.L."/>
            <person name="Cursino-Santos J.R."/>
            <person name="El-Dorry H."/>
            <person name="Faria J.B."/>
            <person name="Ferreira A.J.S."/>
            <person name="Ferreira R.C.C."/>
            <person name="Ferro M.I.T."/>
            <person name="Formighieri E.F."/>
            <person name="Franco M.C."/>
            <person name="Greggio C.C."/>
            <person name="Gruber A."/>
            <person name="Katsuyama A.M."/>
            <person name="Kishi L.T."/>
            <person name="Leite R.P."/>
            <person name="Lemos E.G.M."/>
            <person name="Lemos M.V.F."/>
            <person name="Locali E.C."/>
            <person name="Machado M.A."/>
            <person name="Madeira A.M.B.N."/>
            <person name="Martinez-Rossi N.M."/>
            <person name="Martins E.C."/>
            <person name="Meidanis J."/>
            <person name="Menck C.F.M."/>
            <person name="Miyaki C.Y."/>
            <person name="Moon D.H."/>
            <person name="Moreira L.M."/>
            <person name="Novo M.T.M."/>
            <person name="Okura V.K."/>
            <person name="Oliveira M.C."/>
            <person name="Oliveira V.R."/>
            <person name="Pereira H.A."/>
            <person name="Rossi A."/>
            <person name="Sena J.A.D."/>
            <person name="Silva C."/>
            <person name="de Souza R.F."/>
            <person name="Spinola L.A.F."/>
            <person name="Takita M.A."/>
            <person name="Tamura R.E."/>
            <person name="Teixeira E.C."/>
            <person name="Tezza R.I.D."/>
            <person name="Trindade dos Santos M."/>
            <person name="Truffi D."/>
            <person name="Tsai S.M."/>
            <person name="White F.F."/>
            <person name="Setubal J.C."/>
            <person name="Kitajima J.P."/>
        </authorList>
    </citation>
    <scope>NUCLEOTIDE SEQUENCE [LARGE SCALE GENOMIC DNA]</scope>
    <source>
        <strain>306</strain>
    </source>
</reference>
<keyword id="KW-0067">ATP-binding</keyword>
<keyword id="KW-0997">Cell inner membrane</keyword>
<keyword id="KW-1003">Cell membrane</keyword>
<keyword id="KW-0406">Ion transport</keyword>
<keyword id="KW-0460">Magnesium</keyword>
<keyword id="KW-0472">Membrane</keyword>
<keyword id="KW-0479">Metal-binding</keyword>
<keyword id="KW-0547">Nucleotide-binding</keyword>
<keyword id="KW-0597">Phosphoprotein</keyword>
<keyword id="KW-0630">Potassium</keyword>
<keyword id="KW-0633">Potassium transport</keyword>
<keyword id="KW-1278">Translocase</keyword>
<keyword id="KW-0812">Transmembrane</keyword>
<keyword id="KW-1133">Transmembrane helix</keyword>
<keyword id="KW-0813">Transport</keyword>
<organism>
    <name type="scientific">Xanthomonas axonopodis pv. citri (strain 306)</name>
    <dbReference type="NCBI Taxonomy" id="190486"/>
    <lineage>
        <taxon>Bacteria</taxon>
        <taxon>Pseudomonadati</taxon>
        <taxon>Pseudomonadota</taxon>
        <taxon>Gammaproteobacteria</taxon>
        <taxon>Lysobacterales</taxon>
        <taxon>Lysobacteraceae</taxon>
        <taxon>Xanthomonas</taxon>
    </lineage>
</organism>
<protein>
    <recommendedName>
        <fullName evidence="1">Potassium-transporting ATPase ATP-binding subunit</fullName>
        <ecNumber evidence="1">7.2.2.6</ecNumber>
    </recommendedName>
    <alternativeName>
        <fullName evidence="1">ATP phosphohydrolase [potassium-transporting] B chain</fullName>
    </alternativeName>
    <alternativeName>
        <fullName evidence="1">Potassium-binding and translocating subunit B</fullName>
    </alternativeName>
    <alternativeName>
        <fullName evidence="1">Potassium-translocating ATPase B chain</fullName>
    </alternativeName>
</protein>
<evidence type="ECO:0000255" key="1">
    <source>
        <dbReference type="HAMAP-Rule" id="MF_00285"/>
    </source>
</evidence>
<accession>Q8PPC9</accession>
<sequence length="682" mass="70593">MSTIDTTEKRERGDAALFDAAVLVAAMRAAFAKLAPRHLLRSPVMAVVMGGTVLAAVITASGHSHAGFGWAVTAILFVTVLFGNFAEAIAEARGRGQAASLRRARKDLVARRVETALGGRETRVPAAELRPGDYVMVSEGEFVPADGEIVRGVATINEAAVTGESAPVLREAGTDRSGVIGGTRVLSDEIVFKVTAEPGHSFLDRMIALVEGANRQKTPNEIALTLLLAAMTLTFLIVVASLPAIAGFVGVTLDPLLLIALLVCLIPTTIGGLLPAIGIAGMNRALSANVLAKSGKAVEVAGDVDVLLLDKTGTITYGDRQATAFHPLAGVDRVQLRDAAMLASLADPTPEGKSIVKLARQQGAIAVEAEGGDFIAFTAQTRMSGVDIGGRSIRKGAGDSIVAYVQAQGATVSPELQGRIEEVARGGATPLVVAEGRHVLGVVELSDVVKQGIKEKFAQLRAMGIKTVMITGDNPLTAAAIAAEAGVDDYIAQARPEDKLARIRAEQTGGRLVAMVGDGTNDAPALAQADVGLAMNSGTQAAKEAGNMVDLDSDPAKLLAVVEVGKQQLITRGALTTFSLANDVSKYFAILPALFAAAIPSMAALNVMQLSSPRHAVLAALIFNALIIPALIPLALRGVRFRPSSATALLRRNMMIYGVGGVLLPFAAIKAIDLALVAVLGA</sequence>
<proteinExistence type="inferred from homology"/>